<accession>A1L3F5</accession>
<accession>Q08AX7</accession>
<sequence length="772" mass="86951">MDFTNSSCGGSEHRQIEENKPLLGEMSATGGSKMGAVPCRRSLLHFSGMRYKLLQEGDIQVCAIRHPRTFLSKILTSKFLRRWEPHHLTLADNSLTSATPTGYMENSISYSAIEDVQLLSWENAPKYCLQLTIPGGTVLLQAANSYLRDQWFHSLQWKKKIYKYKKVLSNPNRWEVVLKEIRTLVDMALSSPLQDDSIHQAPLEIISKLLSENINLTTQEHESIIVAIAPLLENNHPPPDLCEFFCKHCRERPRSMVVIEVFTPVVQRILKHNMDFGKCPRLRLFTQEYILALNELNAGMEVVKKFIYSMHGPTANCPHPRVLPNVVAVCLAAIYSCYEEFINSRDNSPSLKEIRNGCQQQCDRKPNIPLRLLHTNPDLVSQEVTSTESRHKSVVVTSNEILVEVERNNTVNQKLKANTGNDSEPNLIDCLLICPACSTISIELSPQADRVLACYVEILKMLSDYDDWRPALAILLQPIPFPKEALAHETFTKELKHVIQRFAEDPRQEVHSCLLSVRAGKDGWFQLYSPGGVACDDDGELFASMVHILMGSCYKTKKFLLSLAENKLGPCMLLALRGNQTMVEILCLMLEYNIIENNDTQLQIISTLESTDVGKRMYEQLCDRQRELKELQRKGGPTRLTLPSKSTDADLARLLSSGSFGNLENLSLAFTNVTSACAEQLIKLPSLKQLNLWSTQFGDAGLRVLSEHLTTLQVLNLCETPVSDAGLLALSSMKSLCNLNMNSTKLSADTYEDLKAKLPNLKEVDVRYTEAW</sequence>
<protein>
    <recommendedName>
        <fullName>C-Maf-inducing protein</fullName>
        <shortName>c-Mip</shortName>
    </recommendedName>
</protein>
<organism>
    <name type="scientific">Xenopus laevis</name>
    <name type="common">African clawed frog</name>
    <dbReference type="NCBI Taxonomy" id="8355"/>
    <lineage>
        <taxon>Eukaryota</taxon>
        <taxon>Metazoa</taxon>
        <taxon>Chordata</taxon>
        <taxon>Craniata</taxon>
        <taxon>Vertebrata</taxon>
        <taxon>Euteleostomi</taxon>
        <taxon>Amphibia</taxon>
        <taxon>Batrachia</taxon>
        <taxon>Anura</taxon>
        <taxon>Pipoidea</taxon>
        <taxon>Pipidae</taxon>
        <taxon>Xenopodinae</taxon>
        <taxon>Xenopus</taxon>
        <taxon>Xenopus</taxon>
    </lineage>
</organism>
<proteinExistence type="evidence at transcript level"/>
<name>CMIP_XENLA</name>
<gene>
    <name type="primary">cmip</name>
</gene>
<comment type="function">
    <text evidence="1">Plays a role in T-cell signaling pathway.</text>
</comment>
<comment type="subcellular location">
    <subcellularLocation>
        <location evidence="1">Nucleus</location>
    </subcellularLocation>
    <subcellularLocation>
        <location evidence="1">Cytoplasm</location>
    </subcellularLocation>
</comment>
<comment type="sequence caution" evidence="2">
    <conflict type="miscellaneous discrepancy">
        <sequence resource="EMBL-CDS" id="AAI24964"/>
    </conflict>
    <text>Contaminating sequence. Potential poly-A sequence.</text>
</comment>
<evidence type="ECO:0000250" key="1"/>
<evidence type="ECO:0000305" key="2"/>
<keyword id="KW-0963">Cytoplasm</keyword>
<keyword id="KW-0433">Leucine-rich repeat</keyword>
<keyword id="KW-0539">Nucleus</keyword>
<keyword id="KW-1185">Reference proteome</keyword>
<keyword id="KW-0677">Repeat</keyword>
<reference key="1">
    <citation type="submission" date="2006-10" db="EMBL/GenBank/DDBJ databases">
        <authorList>
            <consortium name="Sanger Xenopus tropicalis EST/cDNA project"/>
        </authorList>
    </citation>
    <scope>NUCLEOTIDE SEQUENCE [LARGE SCALE MRNA]</scope>
    <source>
        <tissue>Neurula</tissue>
    </source>
</reference>
<reference key="2">
    <citation type="submission" date="2006-10" db="EMBL/GenBank/DDBJ databases">
        <authorList>
            <consortium name="NIH - Xenopus Gene Collection (XGC) project"/>
        </authorList>
    </citation>
    <scope>NUCLEOTIDE SEQUENCE [LARGE SCALE MRNA]</scope>
    <source>
        <tissue>Kidney</tissue>
        <tissue>Spleen</tissue>
    </source>
</reference>
<dbReference type="EMBL" id="CR942635">
    <property type="status" value="NOT_ANNOTATED_CDS"/>
    <property type="molecule type" value="mRNA"/>
</dbReference>
<dbReference type="EMBL" id="BC124963">
    <property type="protein sequence ID" value="AAI24964.1"/>
    <property type="status" value="ALT_SEQ"/>
    <property type="molecule type" value="mRNA"/>
</dbReference>
<dbReference type="EMBL" id="BC130070">
    <property type="protein sequence ID" value="AAI30071.1"/>
    <property type="molecule type" value="mRNA"/>
</dbReference>
<dbReference type="AGR" id="Xenbase:XB-GENE-5766132"/>
<dbReference type="Xenbase" id="XB-GENE-5766132">
    <property type="gene designation" value="cmip.L"/>
</dbReference>
<dbReference type="Proteomes" id="UP000186698">
    <property type="component" value="Unplaced"/>
</dbReference>
<dbReference type="GO" id="GO:0005829">
    <property type="term" value="C:cytosol"/>
    <property type="evidence" value="ECO:0000318"/>
    <property type="project" value="GO_Central"/>
</dbReference>
<dbReference type="GO" id="GO:0005654">
    <property type="term" value="C:nucleoplasm"/>
    <property type="evidence" value="ECO:0000318"/>
    <property type="project" value="GO_Central"/>
</dbReference>
<dbReference type="CDD" id="cd00821">
    <property type="entry name" value="PH"/>
    <property type="match status" value="1"/>
</dbReference>
<dbReference type="FunFam" id="3.80.10.10:FF:000030">
    <property type="entry name" value="C-Maf-inducing protein-like protein"/>
    <property type="match status" value="1"/>
</dbReference>
<dbReference type="Gene3D" id="3.80.10.10">
    <property type="entry name" value="Ribonuclease Inhibitor"/>
    <property type="match status" value="1"/>
</dbReference>
<dbReference type="InterPro" id="IPR052813">
    <property type="entry name" value="CMIP"/>
</dbReference>
<dbReference type="InterPro" id="IPR032675">
    <property type="entry name" value="LRR_dom_sf"/>
</dbReference>
<dbReference type="InterPro" id="IPR056429">
    <property type="entry name" value="PH_CMIP"/>
</dbReference>
<dbReference type="PANTHER" id="PTHR25480:SF0">
    <property type="entry name" value="C-MAF-INDUCING PROTEIN"/>
    <property type="match status" value="1"/>
</dbReference>
<dbReference type="PANTHER" id="PTHR25480">
    <property type="entry name" value="LEUCINE-RICH REPEAT-CONTAINING PROTEIN 73"/>
    <property type="match status" value="1"/>
</dbReference>
<dbReference type="Pfam" id="PF23066">
    <property type="entry name" value="PH_21"/>
    <property type="match status" value="1"/>
</dbReference>
<dbReference type="SUPFAM" id="SSF50729">
    <property type="entry name" value="PH domain-like"/>
    <property type="match status" value="1"/>
</dbReference>
<dbReference type="SUPFAM" id="SSF52047">
    <property type="entry name" value="RNI-like"/>
    <property type="match status" value="1"/>
</dbReference>
<feature type="chain" id="PRO_0000317630" description="C-Maf-inducing protein">
    <location>
        <begin position="1"/>
        <end position="772"/>
    </location>
</feature>
<feature type="domain" description="PH">
    <location>
        <begin position="52"/>
        <end position="160"/>
    </location>
</feature>
<feature type="repeat" description="LRR 1">
    <location>
        <begin position="662"/>
        <end position="683"/>
    </location>
</feature>
<feature type="repeat" description="LRR 2">
    <location>
        <begin position="686"/>
        <end position="706"/>
    </location>
</feature>
<feature type="repeat" description="LRR 3">
    <location>
        <begin position="711"/>
        <end position="731"/>
    </location>
</feature>
<feature type="repeat" description="LRR 4">
    <location>
        <begin position="735"/>
        <end position="755"/>
    </location>
</feature>
<feature type="sequence conflict" description="In Ref. 1; AAI24964." evidence="2" ref="1">
    <original>L</original>
    <variation>Q</variation>
    <location>
        <position position="44"/>
    </location>
</feature>